<protein>
    <recommendedName>
        <fullName evidence="22">E3 ubiquitin-protein ligase HEL2</fullName>
        <ecNumber evidence="6 8 9 10 11">2.3.2.27</ecNumber>
    </recommendedName>
    <alternativeName>
        <fullName evidence="20">Histone E3 ligase 2</fullName>
    </alternativeName>
    <alternativeName>
        <fullName evidence="21">RING-type E3 ubiquitin transferase HEL2</fullName>
    </alternativeName>
</protein>
<proteinExistence type="evidence at protein level"/>
<name>HEL2_YEAST</name>
<dbReference type="EC" id="2.3.2.27" evidence="6 8 9 10 11"/>
<dbReference type="EMBL" id="U51030">
    <property type="protein sequence ID" value="AAB64455.1"/>
    <property type="molecule type" value="Genomic_DNA"/>
</dbReference>
<dbReference type="EMBL" id="BK006938">
    <property type="protein sequence ID" value="DAA12110.1"/>
    <property type="molecule type" value="Genomic_DNA"/>
</dbReference>
<dbReference type="PIR" id="S70126">
    <property type="entry name" value="S70126"/>
</dbReference>
<dbReference type="RefSeq" id="NP_010552.3">
    <property type="nucleotide sequence ID" value="NM_001180574.3"/>
</dbReference>
<dbReference type="BioGRID" id="32322">
    <property type="interactions" value="122"/>
</dbReference>
<dbReference type="DIP" id="DIP-5369N"/>
<dbReference type="FunCoup" id="Q05580">
    <property type="interactions" value="129"/>
</dbReference>
<dbReference type="IntAct" id="Q05580">
    <property type="interactions" value="16"/>
</dbReference>
<dbReference type="MINT" id="Q05580"/>
<dbReference type="STRING" id="4932.YDR266C"/>
<dbReference type="GlyGen" id="Q05580">
    <property type="glycosylation" value="2 sites, 1 O-linked glycan (2 sites)"/>
</dbReference>
<dbReference type="iPTMnet" id="Q05580"/>
<dbReference type="PaxDb" id="4932-YDR266C"/>
<dbReference type="PeptideAtlas" id="Q05580"/>
<dbReference type="EnsemblFungi" id="YDR266C_mRNA">
    <property type="protein sequence ID" value="YDR266C"/>
    <property type="gene ID" value="YDR266C"/>
</dbReference>
<dbReference type="GeneID" id="851859"/>
<dbReference type="KEGG" id="sce:YDR266C"/>
<dbReference type="AGR" id="SGD:S000002674"/>
<dbReference type="SGD" id="S000002674">
    <property type="gene designation" value="HEL2"/>
</dbReference>
<dbReference type="VEuPathDB" id="FungiDB:YDR266C"/>
<dbReference type="eggNOG" id="KOG2231">
    <property type="taxonomic scope" value="Eukaryota"/>
</dbReference>
<dbReference type="GeneTree" id="ENSGT00390000014178"/>
<dbReference type="HOGENOM" id="CLU_008515_2_0_1"/>
<dbReference type="InParanoid" id="Q05580"/>
<dbReference type="OMA" id="HTTCHKC"/>
<dbReference type="OrthoDB" id="3838338at2759"/>
<dbReference type="BioCyc" id="YEAST:G3O-29836-MONOMER"/>
<dbReference type="UniPathway" id="UPA00143"/>
<dbReference type="BioGRID-ORCS" id="851859">
    <property type="hits" value="1 hit in 10 CRISPR screens"/>
</dbReference>
<dbReference type="PRO" id="PR:Q05580"/>
<dbReference type="Proteomes" id="UP000002311">
    <property type="component" value="Chromosome IV"/>
</dbReference>
<dbReference type="RNAct" id="Q05580">
    <property type="molecule type" value="protein"/>
</dbReference>
<dbReference type="GO" id="GO:0005737">
    <property type="term" value="C:cytoplasm"/>
    <property type="evidence" value="ECO:0007005"/>
    <property type="project" value="SGD"/>
</dbReference>
<dbReference type="GO" id="GO:0022626">
    <property type="term" value="C:cytosolic ribosome"/>
    <property type="evidence" value="ECO:0000314"/>
    <property type="project" value="UniProt"/>
</dbReference>
<dbReference type="GO" id="GO:0043022">
    <property type="term" value="F:ribosome binding"/>
    <property type="evidence" value="ECO:0000318"/>
    <property type="project" value="GO_Central"/>
</dbReference>
<dbReference type="GO" id="GO:0070181">
    <property type="term" value="F:small ribosomal subunit rRNA binding"/>
    <property type="evidence" value="ECO:0000314"/>
    <property type="project" value="UniProtKB"/>
</dbReference>
<dbReference type="GO" id="GO:0170011">
    <property type="term" value="F:stalled ribosome sensor activity"/>
    <property type="evidence" value="ECO:0000314"/>
    <property type="project" value="UniProt"/>
</dbReference>
<dbReference type="GO" id="GO:0061630">
    <property type="term" value="F:ubiquitin protein ligase activity"/>
    <property type="evidence" value="ECO:0000314"/>
    <property type="project" value="UniProtKB"/>
</dbReference>
<dbReference type="GO" id="GO:0055106">
    <property type="term" value="F:ubiquitin-protein transferase regulator activity"/>
    <property type="evidence" value="ECO:0000314"/>
    <property type="project" value="UniProt"/>
</dbReference>
<dbReference type="GO" id="GO:0008270">
    <property type="term" value="F:zinc ion binding"/>
    <property type="evidence" value="ECO:0007669"/>
    <property type="project" value="UniProtKB-KW"/>
</dbReference>
<dbReference type="GO" id="GO:0036205">
    <property type="term" value="P:histone catabolic process"/>
    <property type="evidence" value="ECO:0000315"/>
    <property type="project" value="SGD"/>
</dbReference>
<dbReference type="GO" id="GO:0061157">
    <property type="term" value="P:mRNA destabilization"/>
    <property type="evidence" value="ECO:0000315"/>
    <property type="project" value="SGD"/>
</dbReference>
<dbReference type="GO" id="GO:0010629">
    <property type="term" value="P:negative regulation of gene expression"/>
    <property type="evidence" value="ECO:0000315"/>
    <property type="project" value="SGD"/>
</dbReference>
<dbReference type="GO" id="GO:0070651">
    <property type="term" value="P:nonfunctional rRNA decay"/>
    <property type="evidence" value="ECO:0000314"/>
    <property type="project" value="UniProtKB"/>
</dbReference>
<dbReference type="GO" id="GO:0070966">
    <property type="term" value="P:nuclear-transcribed mRNA catabolic process, no-go decay"/>
    <property type="evidence" value="ECO:0000314"/>
    <property type="project" value="UniProt"/>
</dbReference>
<dbReference type="GO" id="GO:0070534">
    <property type="term" value="P:protein K63-linked ubiquitination"/>
    <property type="evidence" value="ECO:0000314"/>
    <property type="project" value="UniProtKB"/>
</dbReference>
<dbReference type="GO" id="GO:0016567">
    <property type="term" value="P:protein ubiquitination"/>
    <property type="evidence" value="ECO:0000318"/>
    <property type="project" value="GO_Central"/>
</dbReference>
<dbReference type="GO" id="GO:0072344">
    <property type="term" value="P:rescue of stalled ribosome"/>
    <property type="evidence" value="ECO:0000314"/>
    <property type="project" value="UniProtKB"/>
</dbReference>
<dbReference type="GO" id="GO:1990116">
    <property type="term" value="P:ribosome-associated ubiquitin-dependent protein catabolic process"/>
    <property type="evidence" value="ECO:0000315"/>
    <property type="project" value="UniProtKB"/>
</dbReference>
<dbReference type="CDD" id="cd16615">
    <property type="entry name" value="RING-HC_ZNF598"/>
    <property type="match status" value="1"/>
</dbReference>
<dbReference type="Gene3D" id="3.30.40.10">
    <property type="entry name" value="Zinc/RING finger domain, C3HC4 (zinc finger)"/>
    <property type="match status" value="1"/>
</dbReference>
<dbReference type="InterPro" id="IPR041888">
    <property type="entry name" value="RING-HC_ZNF598/Hel2"/>
</dbReference>
<dbReference type="InterPro" id="IPR056437">
    <property type="entry name" value="Znf-C2H2_ZNF598/Hel2"/>
</dbReference>
<dbReference type="InterPro" id="IPR044288">
    <property type="entry name" value="ZNF598/Hel2"/>
</dbReference>
<dbReference type="InterPro" id="IPR013087">
    <property type="entry name" value="Znf_C2H2_type"/>
</dbReference>
<dbReference type="InterPro" id="IPR001841">
    <property type="entry name" value="Znf_RING"/>
</dbReference>
<dbReference type="InterPro" id="IPR013083">
    <property type="entry name" value="Znf_RING/FYVE/PHD"/>
</dbReference>
<dbReference type="PANTHER" id="PTHR22938:SF0">
    <property type="entry name" value="E3 UBIQUITIN-PROTEIN LIGASE ZNF598"/>
    <property type="match status" value="1"/>
</dbReference>
<dbReference type="PANTHER" id="PTHR22938">
    <property type="entry name" value="ZINC FINGER PROTEIN 598"/>
    <property type="match status" value="1"/>
</dbReference>
<dbReference type="Pfam" id="PF23202">
    <property type="entry name" value="PAH_ZNF598"/>
    <property type="match status" value="1"/>
</dbReference>
<dbReference type="Pfam" id="PF25447">
    <property type="entry name" value="RING_ZNF598"/>
    <property type="match status" value="1"/>
</dbReference>
<dbReference type="Pfam" id="PF23230">
    <property type="entry name" value="zf-C2H2_13"/>
    <property type="match status" value="1"/>
</dbReference>
<dbReference type="SMART" id="SM00355">
    <property type="entry name" value="ZnF_C2H2"/>
    <property type="match status" value="3"/>
</dbReference>
<dbReference type="SUPFAM" id="SSF57850">
    <property type="entry name" value="RING/U-box"/>
    <property type="match status" value="1"/>
</dbReference>
<dbReference type="PROSITE" id="PS50089">
    <property type="entry name" value="ZF_RING_2"/>
    <property type="match status" value="1"/>
</dbReference>
<dbReference type="PROSITE" id="PS00028">
    <property type="entry name" value="ZINC_FINGER_C2H2_1"/>
    <property type="match status" value="1"/>
</dbReference>
<gene>
    <name evidence="20 23" type="primary">HEL2</name>
    <name evidence="23" type="ordered locus">YDR266C</name>
</gene>
<sequence length="639" mass="72756">MSESVKENVTPTRNFRRTQGPQNNTKPHNDRKNFRRKQKKNNLSAEPNLTTSSADDTDEENELCVICARKLTYVSLTPCHHKTCHICGFRQRALYNKKSCLICRTENEEVMFTDRIDGDISDKYNFCEKNEKYGINFTSEEVATETLNLLKFFCPLSKDEQVCDFGSFKKYNEHLKSEHNRMICLICATHKHAFPCELEIFTQNQLRNHQTKGNSEGFKGHPMCAFCSGKRFYSDDELYIHMRNQHEKCHICDKMNPASPQYFKDYNQLFDHFKHSHYVCTVQTCLDNKFVVFKDELELQAHILQEHGNILKGKPKFFQSELSTFISAPSRVIRERDDYDLPSISSLPGSSSGSRTDVRSASSPEESRLRLAERAKYYLENSKEDFNKFSSYNEDYSKGRLSAEKLLESYKLLFTKPNADVYLLIHNLAETFPKNSSKYNNLNAIYEQREQTLARQTSLPSLSSDSSLSMSIGRGHWGGTNDGGSAGAALGVRNIKNLPTLKSPSASYDPFATTVKKNTLRPVQNIKRTTPQSVSYRTSTNTVAFSPTYLESKKGSSSTSLNNSKDKLKSLNLPQLPPPKPKVQIPGLNRPQIADPKQWGKKSSTQDTNVHDNLRELNTTSGGNKKKGKQKQLLFHIGV</sequence>
<reference key="1">
    <citation type="journal article" date="1997" name="Nature">
        <title>The nucleotide sequence of Saccharomyces cerevisiae chromosome IV.</title>
        <authorList>
            <person name="Jacq C."/>
            <person name="Alt-Moerbe J."/>
            <person name="Andre B."/>
            <person name="Arnold W."/>
            <person name="Bahr A."/>
            <person name="Ballesta J.P.G."/>
            <person name="Bargues M."/>
            <person name="Baron L."/>
            <person name="Becker A."/>
            <person name="Biteau N."/>
            <person name="Bloecker H."/>
            <person name="Blugeon C."/>
            <person name="Boskovic J."/>
            <person name="Brandt P."/>
            <person name="Brueckner M."/>
            <person name="Buitrago M.J."/>
            <person name="Coster F."/>
            <person name="Delaveau T."/>
            <person name="del Rey F."/>
            <person name="Dujon B."/>
            <person name="Eide L.G."/>
            <person name="Garcia-Cantalejo J.M."/>
            <person name="Goffeau A."/>
            <person name="Gomez-Peris A."/>
            <person name="Granotier C."/>
            <person name="Hanemann V."/>
            <person name="Hankeln T."/>
            <person name="Hoheisel J.D."/>
            <person name="Jaeger W."/>
            <person name="Jimenez A."/>
            <person name="Jonniaux J.-L."/>
            <person name="Kraemer C."/>
            <person name="Kuester H."/>
            <person name="Laamanen P."/>
            <person name="Legros Y."/>
            <person name="Louis E.J."/>
            <person name="Moeller-Rieker S."/>
            <person name="Monnet A."/>
            <person name="Moro M."/>
            <person name="Mueller-Auer S."/>
            <person name="Nussbaumer B."/>
            <person name="Paricio N."/>
            <person name="Paulin L."/>
            <person name="Perea J."/>
            <person name="Perez-Alonso M."/>
            <person name="Perez-Ortin J.E."/>
            <person name="Pohl T.M."/>
            <person name="Prydz H."/>
            <person name="Purnelle B."/>
            <person name="Rasmussen S.W."/>
            <person name="Remacha M.A."/>
            <person name="Revuelta J.L."/>
            <person name="Rieger M."/>
            <person name="Salom D."/>
            <person name="Saluz H.P."/>
            <person name="Saiz J.E."/>
            <person name="Saren A.-M."/>
            <person name="Schaefer M."/>
            <person name="Scharfe M."/>
            <person name="Schmidt E.R."/>
            <person name="Schneider C."/>
            <person name="Scholler P."/>
            <person name="Schwarz S."/>
            <person name="Soler-Mira A."/>
            <person name="Urrestarazu L.A."/>
            <person name="Verhasselt P."/>
            <person name="Vissers S."/>
            <person name="Voet M."/>
            <person name="Volckaert G."/>
            <person name="Wagner G."/>
            <person name="Wambutt R."/>
            <person name="Wedler E."/>
            <person name="Wedler H."/>
            <person name="Woelfl S."/>
            <person name="Harris D.E."/>
            <person name="Bowman S."/>
            <person name="Brown D."/>
            <person name="Churcher C.M."/>
            <person name="Connor R."/>
            <person name="Dedman K."/>
            <person name="Gentles S."/>
            <person name="Hamlin N."/>
            <person name="Hunt S."/>
            <person name="Jones L."/>
            <person name="McDonald S."/>
            <person name="Murphy L.D."/>
            <person name="Niblett D."/>
            <person name="Odell C."/>
            <person name="Oliver K."/>
            <person name="Rajandream M.A."/>
            <person name="Richards C."/>
            <person name="Shore L."/>
            <person name="Walsh S.V."/>
            <person name="Barrell B.G."/>
            <person name="Dietrich F.S."/>
            <person name="Mulligan J.T."/>
            <person name="Allen E."/>
            <person name="Araujo R."/>
            <person name="Aviles E."/>
            <person name="Berno A."/>
            <person name="Carpenter J."/>
            <person name="Chen E."/>
            <person name="Cherry J.M."/>
            <person name="Chung E."/>
            <person name="Duncan M."/>
            <person name="Hunicke-Smith S."/>
            <person name="Hyman R.W."/>
            <person name="Komp C."/>
            <person name="Lashkari D."/>
            <person name="Lew H."/>
            <person name="Lin D."/>
            <person name="Mosedale D."/>
            <person name="Nakahara K."/>
            <person name="Namath A."/>
            <person name="Oefner P."/>
            <person name="Oh C."/>
            <person name="Petel F.X."/>
            <person name="Roberts D."/>
            <person name="Schramm S."/>
            <person name="Schroeder M."/>
            <person name="Shogren T."/>
            <person name="Shroff N."/>
            <person name="Winant A."/>
            <person name="Yelton M.A."/>
            <person name="Botstein D."/>
            <person name="Davis R.W."/>
            <person name="Johnston M."/>
            <person name="Andrews S."/>
            <person name="Brinkman R."/>
            <person name="Cooper J."/>
            <person name="Ding H."/>
            <person name="Du Z."/>
            <person name="Favello A."/>
            <person name="Fulton L."/>
            <person name="Gattung S."/>
            <person name="Greco T."/>
            <person name="Hallsworth K."/>
            <person name="Hawkins J."/>
            <person name="Hillier L.W."/>
            <person name="Jier M."/>
            <person name="Johnson D."/>
            <person name="Johnston L."/>
            <person name="Kirsten J."/>
            <person name="Kucaba T."/>
            <person name="Langston Y."/>
            <person name="Latreille P."/>
            <person name="Le T."/>
            <person name="Mardis E."/>
            <person name="Menezes S."/>
            <person name="Miller N."/>
            <person name="Nhan M."/>
            <person name="Pauley A."/>
            <person name="Peluso D."/>
            <person name="Rifkin L."/>
            <person name="Riles L."/>
            <person name="Taich A."/>
            <person name="Trevaskis E."/>
            <person name="Vignati D."/>
            <person name="Wilcox L."/>
            <person name="Wohldman P."/>
            <person name="Vaudin M."/>
            <person name="Wilson R."/>
            <person name="Waterston R."/>
            <person name="Albermann K."/>
            <person name="Hani J."/>
            <person name="Heumann K."/>
            <person name="Kleine K."/>
            <person name="Mewes H.-W."/>
            <person name="Zollner A."/>
            <person name="Zaccaria P."/>
        </authorList>
    </citation>
    <scope>NUCLEOTIDE SEQUENCE [LARGE SCALE GENOMIC DNA]</scope>
    <source>
        <strain>ATCC 204508 / S288c</strain>
    </source>
</reference>
<reference key="2">
    <citation type="journal article" date="2014" name="G3 (Bethesda)">
        <title>The reference genome sequence of Saccharomyces cerevisiae: Then and now.</title>
        <authorList>
            <person name="Engel S.R."/>
            <person name="Dietrich F.S."/>
            <person name="Fisk D.G."/>
            <person name="Binkley G."/>
            <person name="Balakrishnan R."/>
            <person name="Costanzo M.C."/>
            <person name="Dwight S.S."/>
            <person name="Hitz B.C."/>
            <person name="Karra K."/>
            <person name="Nash R.S."/>
            <person name="Weng S."/>
            <person name="Wong E.D."/>
            <person name="Lloyd P."/>
            <person name="Skrzypek M.S."/>
            <person name="Miyasato S.R."/>
            <person name="Simison M."/>
            <person name="Cherry J.M."/>
        </authorList>
    </citation>
    <scope>GENOME REANNOTATION</scope>
    <source>
        <strain>ATCC 204508 / S288c</strain>
    </source>
</reference>
<reference key="3">
    <citation type="journal article" date="2003" name="Nature">
        <title>Global analysis of protein localization in budding yeast.</title>
        <authorList>
            <person name="Huh W.-K."/>
            <person name="Falvo J.V."/>
            <person name="Gerke L.C."/>
            <person name="Carroll A.S."/>
            <person name="Howson R.W."/>
            <person name="Weissman J.S."/>
            <person name="O'Shea E.K."/>
        </authorList>
    </citation>
    <scope>SUBCELLULAR LOCATION [LARGE SCALE ANALYSIS]</scope>
</reference>
<reference key="4">
    <citation type="journal article" date="2003" name="Nature">
        <title>Global analysis of protein expression in yeast.</title>
        <authorList>
            <person name="Ghaemmaghami S."/>
            <person name="Huh W.-K."/>
            <person name="Bower K."/>
            <person name="Howson R.W."/>
            <person name="Belle A."/>
            <person name="Dephoure N."/>
            <person name="O'Shea E.K."/>
            <person name="Weissman J.S."/>
        </authorList>
    </citation>
    <scope>LEVEL OF PROTEIN EXPRESSION [LARGE SCALE ANALYSIS]</scope>
</reference>
<reference key="5">
    <citation type="journal article" date="2007" name="J. Proteome Res.">
        <title>Large-scale phosphorylation analysis of alpha-factor-arrested Saccharomyces cerevisiae.</title>
        <authorList>
            <person name="Li X."/>
            <person name="Gerber S.A."/>
            <person name="Rudner A.D."/>
            <person name="Beausoleil S.A."/>
            <person name="Haas W."/>
            <person name="Villen J."/>
            <person name="Elias J.E."/>
            <person name="Gygi S.P."/>
        </authorList>
    </citation>
    <scope>PHOSPHORYLATION [LARGE SCALE ANALYSIS] AT THR-57</scope>
    <scope>IDENTIFICATION BY MASS SPECTROMETRY [LARGE SCALE ANALYSIS]</scope>
    <source>
        <strain>ADR376</strain>
    </source>
</reference>
<reference key="6">
    <citation type="journal article" date="2008" name="Mol. Cell. Proteomics">
        <title>A multidimensional chromatography technology for in-depth phosphoproteome analysis.</title>
        <authorList>
            <person name="Albuquerque C.P."/>
            <person name="Smolka M.B."/>
            <person name="Payne S.H."/>
            <person name="Bafna V."/>
            <person name="Eng J."/>
            <person name="Zhou H."/>
        </authorList>
    </citation>
    <scope>PHOSPHORYLATION [LARGE SCALE ANALYSIS] AT SER-354</scope>
    <scope>IDENTIFICATION BY MASS SPECTROMETRY [LARGE SCALE ANALYSIS]</scope>
</reference>
<reference key="7">
    <citation type="journal article" date="2009" name="Science">
        <title>Global analysis of Cdk1 substrate phosphorylation sites provides insights into evolution.</title>
        <authorList>
            <person name="Holt L.J."/>
            <person name="Tuch B.B."/>
            <person name="Villen J."/>
            <person name="Johnson A.D."/>
            <person name="Gygi S.P."/>
            <person name="Morgan D.O."/>
        </authorList>
    </citation>
    <scope>PHOSPHORYLATION [LARGE SCALE ANALYSIS] AT THR-57</scope>
    <scope>IDENTIFICATION BY MASS SPECTROMETRY [LARGE SCALE ANALYSIS]</scope>
</reference>
<reference key="8">
    <citation type="journal article" date="2012" name="PLoS ONE">
        <title>Novel E3 ubiquitin ligases that regulate histone protein levels in the budding yeast Saccharomyces cerevisiae.</title>
        <authorList>
            <person name="Singh R.K."/>
            <person name="Gonzalez M."/>
            <person name="Kabbaj M.H."/>
            <person name="Gunjan A."/>
        </authorList>
    </citation>
    <scope>FUNCTION</scope>
    <scope>CATALYTIC ACTIVITY</scope>
    <scope>PATHWAY</scope>
    <scope>INTERACTION WITH UBC4</scope>
    <scope>INTERACTION WITH HISTONES H3 AND H4</scope>
</reference>
<reference key="9">
    <citation type="journal article" date="2012" name="Proc. Natl. Acad. Sci. U.S.A.">
        <title>N-terminal acetylome analyses and functional insights of the N-terminal acetyltransferase NatB.</title>
        <authorList>
            <person name="Van Damme P."/>
            <person name="Lasa M."/>
            <person name="Polevoda B."/>
            <person name="Gazquez C."/>
            <person name="Elosegui-Artola A."/>
            <person name="Kim D.S."/>
            <person name="De Juan-Pardo E."/>
            <person name="Demeyer K."/>
            <person name="Hole K."/>
            <person name="Larrea E."/>
            <person name="Timmerman E."/>
            <person name="Prieto J."/>
            <person name="Arnesen T."/>
            <person name="Sherman F."/>
            <person name="Gevaert K."/>
            <person name="Aldabe R."/>
        </authorList>
    </citation>
    <scope>ACETYLATION [LARGE SCALE ANALYSIS] AT SER-2</scope>
    <scope>CLEAVAGE OF INITIATOR METHIONINE [LARGE SCALE ANALYSIS]</scope>
    <scope>IDENTIFICATION BY MASS SPECTROMETRY [LARGE SCALE ANALYSIS]</scope>
</reference>
<reference key="10">
    <citation type="journal article" date="2017" name="Mol. Cell">
        <title>Ribosome collision is critical for quality control during No-Go decay.</title>
        <authorList>
            <person name="Simms C.L."/>
            <person name="Yan L.L."/>
            <person name="Zaher H.S."/>
        </authorList>
    </citation>
    <scope>FUNCTION</scope>
    <scope>CATALYTIC ACTIVITY</scope>
    <scope>PATHWAY</scope>
</reference>
<reference key="11">
    <citation type="journal article" date="2017" name="Nat. Commun.">
        <title>Ubiquitination of stalled ribosome triggers ribosome-associated quality control.</title>
        <authorList>
            <person name="Matsuo Y."/>
            <person name="Ikeuchi K."/>
            <person name="Saeki Y."/>
            <person name="Iwasaki S."/>
            <person name="Schmidt C."/>
            <person name="Udagawa T."/>
            <person name="Sato F."/>
            <person name="Tsuchiya H."/>
            <person name="Becker T."/>
            <person name="Tanaka K."/>
            <person name="Ingolia N.T."/>
            <person name="Beckmann R."/>
            <person name="Inada T."/>
        </authorList>
    </citation>
    <scope>FUNCTION</scope>
    <scope>CATALYTIC ACTIVITY</scope>
    <scope>PATHWAY</scope>
</reference>
<reference key="12">
    <citation type="journal article" date="2017" name="RNA">
        <title>Asc1, Hel2, and Slh1 couple translation arrest to nascent chain degradation.</title>
        <authorList>
            <person name="Sitron C.S."/>
            <person name="Park J.H."/>
            <person name="Brandman O."/>
        </authorList>
    </citation>
    <scope>FUNCTION</scope>
</reference>
<reference key="13">
    <citation type="journal article" date="2019" name="Cell Rep.">
        <title>Sequential ubiquitination of ribosomal protein uS3 triggers the degradation of non-functional 18S rRNA.</title>
        <authorList>
            <person name="Sugiyama T."/>
            <person name="Li S."/>
            <person name="Kato M."/>
            <person name="Ikeuchi K."/>
            <person name="Ichimura A."/>
            <person name="Matsuo Y."/>
            <person name="Inada T."/>
        </authorList>
    </citation>
    <scope>FUNCTION</scope>
    <scope>CATALYTIC ACTIVITY</scope>
    <scope>PATHWAY</scope>
</reference>
<reference key="14">
    <citation type="journal article" date="2019" name="EMBO J.">
        <title>Collided ribosomes form a unique structural interface to induce Hel2-driven quality control pathways.</title>
        <authorList>
            <person name="Ikeuchi K."/>
            <person name="Tesina P."/>
            <person name="Matsuo Y."/>
            <person name="Sugiyama T."/>
            <person name="Cheng J."/>
            <person name="Saeki Y."/>
            <person name="Tanaka K."/>
            <person name="Becker T."/>
            <person name="Beckmann R."/>
            <person name="Inada T."/>
        </authorList>
    </citation>
    <scope>FUNCTION</scope>
    <scope>CATALYTIC ACTIVITY</scope>
    <scope>PATHWAY</scope>
    <scope>MUTAGENESIS OF 64-CYS--CYS-67</scope>
</reference>
<reference key="15">
    <citation type="journal article" date="2019" name="Nat. Commun.">
        <title>Molecular interactions between Hel2 and RNA supporting ribosome-associated quality control.</title>
        <authorList>
            <person name="Winz M.L."/>
            <person name="Peil L."/>
            <person name="Turowski T.W."/>
            <person name="Rappsilber J."/>
            <person name="Tollervey D."/>
        </authorList>
    </citation>
    <scope>FUNCTION</scope>
    <scope>CATALYTIC ACTIVITY</scope>
    <scope>PATHWAY</scope>
    <scope>RRNA-BINDING</scope>
</reference>
<reference key="16">
    <citation type="journal article" date="2019" name="Nat. Commun.">
        <title>Oxidation and alkylation stresses activate ribosome-quality control.</title>
        <authorList>
            <person name="Yan L.L."/>
            <person name="Simms C.L."/>
            <person name="McLoughlin F."/>
            <person name="Vierstra R.D."/>
            <person name="Zaher H.S."/>
        </authorList>
    </citation>
    <scope>FUNCTION</scope>
    <scope>PATHWAY</scope>
</reference>
<reference key="17">
    <citation type="journal article" date="2019" name="PLoS Biol.">
        <title>Inverted translational control of eukaryotic gene expression by ribosome collisions.</title>
        <authorList>
            <person name="Park H."/>
            <person name="Subramaniam A.R."/>
        </authorList>
    </citation>
    <scope>FUNCTION</scope>
</reference>
<reference key="18">
    <citation type="journal article" date="2020" name="Mol. Cell">
        <title>Disome and trisome profiling reveal genome-wide targets of ribosome quality control.</title>
        <authorList>
            <person name="Meydan S."/>
            <person name="Guydosh N.R."/>
        </authorList>
    </citation>
    <scope>FUNCTION</scope>
</reference>
<reference key="19">
    <citation type="journal article" date="2020" name="Nat. Struct. Mol. Biol.">
        <title>RQT complex dissociates ribosomes collided on endogenous RQC substrate SDD1.</title>
        <authorList>
            <person name="Matsuo Y."/>
            <person name="Tesina P."/>
            <person name="Nakajima S."/>
            <person name="Mizuno M."/>
            <person name="Endo A."/>
            <person name="Buschauer R."/>
            <person name="Cheng J."/>
            <person name="Shounai O."/>
            <person name="Ikeuchi K."/>
            <person name="Saeki Y."/>
            <person name="Becker T."/>
            <person name="Beckmann R."/>
            <person name="Inada T."/>
        </authorList>
    </citation>
    <scope>FUNCTION</scope>
</reference>
<reference key="20">
    <citation type="journal article" date="2021" name="Cell Rep.">
        <title>The ribosome collision sensor Hel2 functions as preventive quality control in the secretory pathway.</title>
        <authorList>
            <person name="Matsuo Y."/>
            <person name="Inada T."/>
        </authorList>
    </citation>
    <scope>FUNCTION</scope>
</reference>
<reference key="21">
    <citation type="journal article" date="2021" name="Mol. Cell">
        <title>Ribosome quality control antagonizes the activation of the integrated stress response on colliding ribosomes.</title>
        <authorList>
            <person name="Yan L.L."/>
            <person name="Zaher H.S."/>
        </authorList>
    </citation>
    <scope>FUNCTION</scope>
</reference>
<reference key="22">
    <citation type="journal article" date="2023" name="Nat. Commun.">
        <title>Decoding of the ubiquitin code for clearance of colliding ribosomes by the RQT complex.</title>
        <authorList>
            <person name="Matsuo Y."/>
            <person name="Uchihashi T."/>
            <person name="Inada T."/>
        </authorList>
    </citation>
    <scope>FUNCTION</scope>
</reference>
<accession>Q05580</accession>
<accession>D6VSQ0</accession>
<keyword id="KW-0007">Acetylation</keyword>
<keyword id="KW-0963">Cytoplasm</keyword>
<keyword id="KW-0440">LIM domain</keyword>
<keyword id="KW-0479">Metal-binding</keyword>
<keyword id="KW-0597">Phosphoprotein</keyword>
<keyword id="KW-1185">Reference proteome</keyword>
<keyword id="KW-0808">Transferase</keyword>
<keyword id="KW-0833">Ubl conjugation pathway</keyword>
<keyword id="KW-0862">Zinc</keyword>
<keyword id="KW-0863">Zinc-finger</keyword>
<organism>
    <name type="scientific">Saccharomyces cerevisiae (strain ATCC 204508 / S288c)</name>
    <name type="common">Baker's yeast</name>
    <dbReference type="NCBI Taxonomy" id="559292"/>
    <lineage>
        <taxon>Eukaryota</taxon>
        <taxon>Fungi</taxon>
        <taxon>Dikarya</taxon>
        <taxon>Ascomycota</taxon>
        <taxon>Saccharomycotina</taxon>
        <taxon>Saccharomycetes</taxon>
        <taxon>Saccharomycetales</taxon>
        <taxon>Saccharomycetaceae</taxon>
        <taxon>Saccharomyces</taxon>
    </lineage>
</organism>
<comment type="function">
    <text evidence="6 7 8 9 10 11 12 13 14 15 16 17 18 19">E3 ubiquitin-protein ligase that plays a key role in the ribosome quality control (RQC), a pathway that takes place when a ribosome has stalled during translation, leading to degradation of nascent peptide chains (PubMed:28223409, PubMed:28757607, PubMed:30609991, PubMed:31532761, PubMed:31819057, PubMed:32203490, PubMed:32615089, PubMed:33338396, PubMed:36627279). HEL2 is activated when ribosomes are stalled within an mRNA following translation of prematurely polyadenylated mRNAs (PubMed:28757607). Acts as a ribosome collision sensor: specifically recognizes and binds collided ribosome and ubiquitinates the 40S ribosomal proteins RPS20/uS10 and RPS3/uS3 (PubMed:30609991, PubMed:31819057, PubMed:32203490, PubMed:32615089). Catalyzes 'Lys-63'-linked polyubiquitination of RPS20/uS10, promoting recruitment of the RQT (ribosome quality control trigger) complex, which drives the disassembly of stalled ribosomes, followed by degradation of nascent peptides (PubMed:30609991, PubMed:31819057, PubMed:36627279). HEL2 also acts as an activator of the No-Go decay (NGD) pathway by mediating polyubiquitination of monoubiquitinated RPS3/uS3 and RPS7/es7: RPS3/uS3 and RPS7/es7 are first monoubiquitinated by MAG2 and MOT2/NOT4, respectively, and HEL2 mediates formation of 'Lys-63'-linked polyubiquitin chains on monoubiquitin, leading to activation of the NGD pathway in a CUE2-mediated endonucleolytic cleavage (PubMed:28943311, PubMed:30609991, PubMed:30718516, PubMed:30893611). Polyubiquitination of RPS3/uS3 also triggers degradation of non-functional 18S rRNA (PubMed:30718516, PubMed:30893611). The RQC pathway and the integrated stress response (ISR) antagonize each other: HEL2 prevents the activation of GCN2, while GCN2 suppresses RQC activation (PubMed:32615089, PubMed:33338396). The RQC pathway functions as a preventive quality control in the secretory pathway: HEL2 binds preferentially to the pre-engaged secretory ribosome-nascent chain complexes and prevents mistargeting of secretory proteins into mitochondria (PubMed:33761353). Independently of its role in RQC, also involved in the polyubiquitination and proteasomal-degradation of excess histone proteins (PubMed:22570702).</text>
</comment>
<comment type="catalytic activity">
    <reaction evidence="6 8 9 10 11 12">
        <text>S-ubiquitinyl-[E2 ubiquitin-conjugating enzyme]-L-cysteine + [acceptor protein]-L-lysine = [E2 ubiquitin-conjugating enzyme]-L-cysteine + N(6)-ubiquitinyl-[acceptor protein]-L-lysine.</text>
        <dbReference type="EC" id="2.3.2.27"/>
    </reaction>
</comment>
<comment type="pathway">
    <text evidence="6 8 9 10 11 12 14">Protein modification; protein ubiquitination.</text>
</comment>
<comment type="subunit">
    <text evidence="6">Interacts with the E2 ubiquitin-conjugating enzyme UBC4 (PubMed:22570702). Interacts with histones H3 and H4 (PubMed:22570702).</text>
</comment>
<comment type="subcellular location">
    <subcellularLocation>
        <location evidence="4">Cytoplasm</location>
    </subcellularLocation>
</comment>
<comment type="miscellaneous">
    <text evidence="5">Present with 1960 molecules/cell in log phase SD medium.</text>
</comment>
<comment type="similarity">
    <text evidence="21">Belongs to the ZNF598/HEL2 family.</text>
</comment>
<evidence type="ECO:0000255" key="1">
    <source>
        <dbReference type="PROSITE-ProRule" id="PRU00125"/>
    </source>
</evidence>
<evidence type="ECO:0000255" key="2">
    <source>
        <dbReference type="PROSITE-ProRule" id="PRU00175"/>
    </source>
</evidence>
<evidence type="ECO:0000256" key="3">
    <source>
        <dbReference type="SAM" id="MobiDB-lite"/>
    </source>
</evidence>
<evidence type="ECO:0000269" key="4">
    <source>
    </source>
</evidence>
<evidence type="ECO:0000269" key="5">
    <source>
    </source>
</evidence>
<evidence type="ECO:0000269" key="6">
    <source>
    </source>
</evidence>
<evidence type="ECO:0000269" key="7">
    <source>
    </source>
</evidence>
<evidence type="ECO:0000269" key="8">
    <source>
    </source>
</evidence>
<evidence type="ECO:0000269" key="9">
    <source>
    </source>
</evidence>
<evidence type="ECO:0000269" key="10">
    <source>
    </source>
</evidence>
<evidence type="ECO:0000269" key="11">
    <source>
    </source>
</evidence>
<evidence type="ECO:0000269" key="12">
    <source>
    </source>
</evidence>
<evidence type="ECO:0000269" key="13">
    <source>
    </source>
</evidence>
<evidence type="ECO:0000269" key="14">
    <source>
    </source>
</evidence>
<evidence type="ECO:0000269" key="15">
    <source>
    </source>
</evidence>
<evidence type="ECO:0000269" key="16">
    <source>
    </source>
</evidence>
<evidence type="ECO:0000269" key="17">
    <source>
    </source>
</evidence>
<evidence type="ECO:0000269" key="18">
    <source>
    </source>
</evidence>
<evidence type="ECO:0000269" key="19">
    <source>
    </source>
</evidence>
<evidence type="ECO:0000303" key="20">
    <source>
    </source>
</evidence>
<evidence type="ECO:0000305" key="21"/>
<evidence type="ECO:0000305" key="22">
    <source>
    </source>
</evidence>
<evidence type="ECO:0000312" key="23">
    <source>
        <dbReference type="SGD" id="S000002674"/>
    </source>
</evidence>
<evidence type="ECO:0007744" key="24">
    <source>
    </source>
</evidence>
<evidence type="ECO:0007744" key="25">
    <source>
    </source>
</evidence>
<evidence type="ECO:0007744" key="26">
    <source>
    </source>
</evidence>
<evidence type="ECO:0007744" key="27">
    <source>
    </source>
</evidence>
<feature type="initiator methionine" description="Removed" evidence="27">
    <location>
        <position position="1"/>
    </location>
</feature>
<feature type="chain" id="PRO_0000253811" description="E3 ubiquitin-protein ligase HEL2">
    <location>
        <begin position="2"/>
        <end position="639"/>
    </location>
</feature>
<feature type="domain" description="LIM zinc-binding" evidence="1">
    <location>
        <begin position="222"/>
        <end position="292"/>
    </location>
</feature>
<feature type="zinc finger region" description="RING-type" evidence="2">
    <location>
        <begin position="64"/>
        <end position="104"/>
    </location>
</feature>
<feature type="region of interest" description="Disordered" evidence="3">
    <location>
        <begin position="1"/>
        <end position="55"/>
    </location>
</feature>
<feature type="region of interest" description="Disordered" evidence="3">
    <location>
        <begin position="343"/>
        <end position="367"/>
    </location>
</feature>
<feature type="region of interest" description="Disordered" evidence="3">
    <location>
        <begin position="550"/>
        <end position="631"/>
    </location>
</feature>
<feature type="compositionally biased region" description="Polar residues" evidence="3">
    <location>
        <begin position="7"/>
        <end position="26"/>
    </location>
</feature>
<feature type="compositionally biased region" description="Polar residues" evidence="3">
    <location>
        <begin position="43"/>
        <end position="54"/>
    </location>
</feature>
<feature type="compositionally biased region" description="Low complexity" evidence="3">
    <location>
        <begin position="343"/>
        <end position="354"/>
    </location>
</feature>
<feature type="modified residue" description="N-acetylserine" evidence="27">
    <location>
        <position position="2"/>
    </location>
</feature>
<feature type="modified residue" description="Phosphothreonine" evidence="24 26">
    <location>
        <position position="57"/>
    </location>
</feature>
<feature type="modified residue" description="Phosphoserine" evidence="25">
    <location>
        <position position="354"/>
    </location>
</feature>
<feature type="mutagenesis site" description="Abolished E3 ubiquitin-protein ligase activity and ability to activate the ribosome quality control (RQC) and No-Go Decay (NGD) pathways." evidence="10">
    <original>CVIC</original>
    <variation>AVIA</variation>
    <location>
        <begin position="64"/>
        <end position="67"/>
    </location>
</feature>